<sequence>MFSRRSHGDVKKSTQKVLDPKKDVLTRLKHLRALLDNVDASDLKQFFETNYSQIYFIFYENFITLENSLKLKGNNKSQREELDSILFLFEKILQFLPERIFFRWHYQSIGSTLKKLLHTGNSIKIRCEGIRLFLLWLQALQTNCAEEQVLIFACLVPGFPAVLSSRGPCTLETLINPSPSIVDAKIYPEEITPLLPAISGEKIAEDQTCFFLQILLKYMVIQAASLEWKNKENQDTGFKFLFTLFRKYYLPHLFPSFTKLTNIYKPVLEIPHLRPKPVYVTVTRDNETIYSTKIPYMAARVVFIKWIVTFFLEKKYLTATQNTKNGVDVLPKIIQTVGGGAIQEKVPELDGAGSTEQDKSHSNSSTLSDRRLSNSSLCSIEEEHRTVYEMVQRILLSTRGYVNFVNEVFRQAFLLPSCEISVTRKVVQVYRKWILQNKPVFMEEPDKKDVAQEDADKLGLSETDSKEASSESSGHKRSSSWGRTYSFTSAMSRGCVTEEDNTNVKAGAQAMLQVFLTNAANVFLLEPCAEVPMLLREQVDASKAVLIIFRRMIMELTMNQKTWEQMLQILLRITEAVMQKPKDKHVKDLFAQSLAGLLFRTLIVAWIRANLCVYISRELWDDFLRVLSSLTEWEELITEWSNIMDSLTAVLARTVYGVEMTNLPLDKLSEQKEKKQRGKGCILEPQKGTAVGRSFSLSWRSHPDVTEPMRFRSATTSGAPGVEKARNTVRQKATEVEEFQQAESTAAADCDYLVVGQQQVPRSSSTSDITERLYSDSSQGQKVEHSQNLSSSEPKSVQESKGHVTHEHEGITMLVRRSSSPAELELKDDLQQAHGRCRQRQTSESTGSDTVVGYSNEAELPVSPWQACEEDPDLSTPTDAVADSDARHWLQLSPTDASNLTDSRECLADDCSIIAGGNLTGWHPDSAAVLWRRVLGILGDVNNIQSPKIHAKVFGYLYELWYKLAKIRDNLAISLDNQSSPSPPLLIPPLRMFASWLFKATTLPNEYKEGKLQAYKLICAMMTRRQDVLPNSDFLVHFYLVMHLGLTSEDQDVLNTIIKNCSPRFFSLGLPGFSMLVGDFITAAARVLSTDMLAAPRSEALTLLGSLVCFPNTYQEIPLLQSVPEVSDVVTGAEDVKHYLINILLKNATEEPNECARCIAICSLGVWICEELAQSASHPQVKDAINVIGVTLKFPNKIVAQVACDVLQLLVSYWEKLQMFETALPRKMAEILVATIAFLLPSAEYSSVETDKKFIVSLLLCLLDWCMALPVSALLHPVSTAVLEELHPSRAPLLDYIYRVLHCCVCGSSTYTQQSHYTLTLADLSSTDYDPFLPLANVRNSEPIQYHSSADLGNLLTVEEEKKRRSVELIPLTARMVMAHLVNHLGHYPLSGGPAVLHSLVSENHDNAHVEGTELSSEVFRSPNLQLFVFNDSTLISYLQTPAEGPAGGTSGGSLSDVRVIVRDISGKYSWDGKVLYGPLEGRLAPNGRNPSFQISGWHHHTCGPQKDLFNGEEGDDVLDKLLENIGHTSPECLLPSQLNLNEPSPTPCAMNWDQEKAIMEVILRQSAQEDEYVQRCNSDSSVTVTSQGQPSPVEPRGPFYFCRLLLDDLGMNSWDRRKNFHLLKKNSKLLRELKNLDSRQCRETHKIAVFYIAEGQEDKCSILANERGSQAYEDFVAGLGWEVDLSTHCGFMGGLQRNGSTGQTAPYYATSTVEVIFHVSTRMPSDSDDSLTKKLRHLGNDEVHIVWSEHSRDYRRGIIPTAFGDVSIIIYPMKNHMFFITITKKPEVPFFGPLFDGAIVSGKLLPSLICATCINASRAVKCLIPLYQSFYEERALYLEAIIQNHREVMTFEDFAAQVFSPSPSYSVSGTD</sequence>
<proteinExistence type="evidence at protein level"/>
<organism>
    <name type="scientific">Mus musculus</name>
    <name type="common">Mouse</name>
    <dbReference type="NCBI Taxonomy" id="10090"/>
    <lineage>
        <taxon>Eukaryota</taxon>
        <taxon>Metazoa</taxon>
        <taxon>Chordata</taxon>
        <taxon>Craniata</taxon>
        <taxon>Vertebrata</taxon>
        <taxon>Euteleostomi</taxon>
        <taxon>Mammalia</taxon>
        <taxon>Eutheria</taxon>
        <taxon>Euarchontoglires</taxon>
        <taxon>Glires</taxon>
        <taxon>Rodentia</taxon>
        <taxon>Myomorpha</taxon>
        <taxon>Muroidea</taxon>
        <taxon>Muridae</taxon>
        <taxon>Murinae</taxon>
        <taxon>Mus</taxon>
        <taxon>Mus</taxon>
    </lineage>
</organism>
<name>RGPA2_MOUSE</name>
<feature type="chain" id="PRO_0000286973" description="Ral GTPase-activating protein subunit alpha-2">
    <location>
        <begin position="1"/>
        <end position="1872"/>
    </location>
</feature>
<feature type="domain" description="Rap-GAP" evidence="3">
    <location>
        <begin position="1634"/>
        <end position="1842"/>
    </location>
</feature>
<feature type="region of interest" description="Disordered" evidence="4">
    <location>
        <begin position="350"/>
        <end position="370"/>
    </location>
</feature>
<feature type="region of interest" description="Disordered" evidence="4">
    <location>
        <begin position="445"/>
        <end position="481"/>
    </location>
</feature>
<feature type="region of interest" description="Disordered" evidence="4">
    <location>
        <begin position="711"/>
        <end position="730"/>
    </location>
</feature>
<feature type="region of interest" description="Disordered" evidence="4">
    <location>
        <begin position="758"/>
        <end position="813"/>
    </location>
</feature>
<feature type="region of interest" description="Disordered" evidence="4">
    <location>
        <begin position="831"/>
        <end position="851"/>
    </location>
</feature>
<feature type="compositionally biased region" description="Basic and acidic residues" evidence="4">
    <location>
        <begin position="445"/>
        <end position="469"/>
    </location>
</feature>
<feature type="compositionally biased region" description="Polar residues" evidence="4">
    <location>
        <begin position="758"/>
        <end position="768"/>
    </location>
</feature>
<feature type="compositionally biased region" description="Polar residues" evidence="4">
    <location>
        <begin position="775"/>
        <end position="795"/>
    </location>
</feature>
<feature type="compositionally biased region" description="Basic and acidic residues" evidence="4">
    <location>
        <begin position="796"/>
        <end position="810"/>
    </location>
</feature>
<feature type="compositionally biased region" description="Polar residues" evidence="4">
    <location>
        <begin position="840"/>
        <end position="849"/>
    </location>
</feature>
<feature type="modified residue" description="Phosphoserine" evidence="9">
    <location>
        <position position="373"/>
    </location>
</feature>
<feature type="modified residue" description="Phosphoserine" evidence="9">
    <location>
        <position position="376"/>
    </location>
</feature>
<feature type="modified residue" description="Phosphoserine" evidence="9">
    <location>
        <position position="379"/>
    </location>
</feature>
<feature type="modified residue" description="Phosphoserine" evidence="9">
    <location>
        <position position="486"/>
    </location>
</feature>
<feature type="modified residue" description="Phosphoserine; by PKB" evidence="2">
    <location>
        <position position="696"/>
    </location>
</feature>
<feature type="modified residue" description="Phosphothreonine; by PKB" evidence="2">
    <location>
        <position position="715"/>
    </location>
</feature>
<feature type="modified residue" description="Phosphoserine" evidence="8 9">
    <location>
        <position position="819"/>
    </location>
</feature>
<feature type="modified residue" description="Phosphoserine" evidence="8 9">
    <location>
        <position position="820"/>
    </location>
</feature>
<feature type="modified residue" description="Phosphoserine" evidence="2">
    <location>
        <position position="1592"/>
    </location>
</feature>
<feature type="splice variant" id="VSP_025251" description="In isoform 2." evidence="6">
    <original>VPFFGPLFDGAIVSGKLLP</original>
    <variation>LLLKIEKFHSLGPCSMERS</variation>
    <location>
        <begin position="1789"/>
        <end position="1807"/>
    </location>
</feature>
<feature type="splice variant" id="VSP_025252" description="In isoform 2." evidence="6">
    <location>
        <begin position="1808"/>
        <end position="1872"/>
    </location>
</feature>
<feature type="sequence conflict" description="In Ref. 2; BAC30146." evidence="7" ref="2">
    <original>Q</original>
    <variation>R</variation>
    <location>
        <position position="436"/>
    </location>
</feature>
<feature type="sequence conflict" description="In Ref. 2; BAE34270." evidence="7" ref="2">
    <original>K</original>
    <variation>E</variation>
    <location>
        <position position="447"/>
    </location>
</feature>
<feature type="sequence conflict" description="In Ref. 4; AAH53994." evidence="7" ref="4">
    <original>N</original>
    <variation>H</variation>
    <location>
        <position position="1511"/>
    </location>
</feature>
<feature type="sequence conflict" description="In Ref. 5; BAD32418." evidence="7" ref="5">
    <original>D</original>
    <variation>V</variation>
    <location>
        <position position="1727"/>
    </location>
</feature>
<protein>
    <recommendedName>
        <fullName>Ral GTPase-activating protein subunit alpha-2</fullName>
    </recommendedName>
    <alternativeName>
        <fullName>250 kDa substrate of Akt</fullName>
        <shortName>AS250</shortName>
    </alternativeName>
    <alternativeName>
        <fullName>P220</fullName>
    </alternativeName>
</protein>
<comment type="function">
    <text evidence="1">Catalytic subunit of the heterodimeric RalGAP2 complex which acts as a GTPase activator for the Ras-like small GTPases RALA and RALB.</text>
</comment>
<comment type="subunit">
    <text evidence="1">Component of the heterodimeric RalGAP2 complex with RALGAPB. Heterodimerization is required for activity (By similarity).</text>
</comment>
<comment type="subcellular location">
    <subcellularLocation>
        <location evidence="1">Cytoplasm</location>
    </subcellularLocation>
</comment>
<comment type="alternative products">
    <event type="alternative splicing"/>
    <isoform>
        <id>A3KGS3-1</id>
        <name>1</name>
        <sequence type="displayed"/>
    </isoform>
    <isoform>
        <id>A3KGS3-2</id>
        <name>2</name>
        <sequence type="described" ref="VSP_025251 VSP_025252"/>
    </isoform>
</comment>
<comment type="tissue specificity">
    <text evidence="5">Abundantly expressed in testis, pancreas, lung, thymus, brown fat, and white fat.</text>
</comment>
<comment type="sequence caution" evidence="7">
    <conflict type="erroneous initiation">
        <sequence resource="EMBL-CDS" id="BAC30146"/>
    </conflict>
    <text>Extended N-terminus.</text>
</comment>
<comment type="sequence caution" evidence="7">
    <conflict type="miscellaneous discrepancy">
        <sequence resource="EMBL-CDS" id="BAC30146"/>
    </conflict>
    <text>Probable cloning artifact leading to erroneous C-terminus.</text>
</comment>
<comment type="sequence caution" evidence="7">
    <conflict type="erroneous gene model prediction">
        <sequence resource="EMBL-CDS" id="CAM46007"/>
    </conflict>
</comment>
<comment type="sequence caution" evidence="7">
    <conflict type="erroneous gene model prediction">
        <sequence resource="EMBL-CDS" id="CAM46125"/>
    </conflict>
</comment>
<comment type="sequence caution" evidence="7">
    <conflict type="erroneous gene model prediction">
        <sequence resource="EMBL-CDS" id="CAM46200"/>
    </conflict>
</comment>
<dbReference type="EMBL" id="AL845273">
    <property type="protein sequence ID" value="CAM46125.1"/>
    <property type="status" value="ALT_SEQ"/>
    <property type="molecule type" value="Genomic_DNA"/>
</dbReference>
<dbReference type="EMBL" id="AL845430">
    <property type="protein sequence ID" value="CAM46125.1"/>
    <property type="status" value="JOINED"/>
    <property type="molecule type" value="Genomic_DNA"/>
</dbReference>
<dbReference type="EMBL" id="AL935056">
    <property type="protein sequence ID" value="CAM46125.1"/>
    <property type="status" value="JOINED"/>
    <property type="molecule type" value="Genomic_DNA"/>
</dbReference>
<dbReference type="EMBL" id="AL845273">
    <property type="protein sequence ID" value="CAX15311.1"/>
    <property type="molecule type" value="Genomic_DNA"/>
</dbReference>
<dbReference type="EMBL" id="AL845430">
    <property type="protein sequence ID" value="CAX15311.1"/>
    <property type="status" value="JOINED"/>
    <property type="molecule type" value="Genomic_DNA"/>
</dbReference>
<dbReference type="EMBL" id="AL935056">
    <property type="protein sequence ID" value="CAX15311.1"/>
    <property type="status" value="JOINED"/>
    <property type="molecule type" value="Genomic_DNA"/>
</dbReference>
<dbReference type="EMBL" id="AL845430">
    <property type="protein sequence ID" value="CAM46200.1"/>
    <property type="status" value="ALT_SEQ"/>
    <property type="molecule type" value="Genomic_DNA"/>
</dbReference>
<dbReference type="EMBL" id="AL845273">
    <property type="protein sequence ID" value="CAM46200.1"/>
    <property type="status" value="JOINED"/>
    <property type="molecule type" value="Genomic_DNA"/>
</dbReference>
<dbReference type="EMBL" id="AL935056">
    <property type="protein sequence ID" value="CAM46200.1"/>
    <property type="status" value="JOINED"/>
    <property type="molecule type" value="Genomic_DNA"/>
</dbReference>
<dbReference type="EMBL" id="AL845430">
    <property type="protein sequence ID" value="CAX15398.1"/>
    <property type="molecule type" value="Genomic_DNA"/>
</dbReference>
<dbReference type="EMBL" id="AL845273">
    <property type="protein sequence ID" value="CAX15398.1"/>
    <property type="status" value="JOINED"/>
    <property type="molecule type" value="Genomic_DNA"/>
</dbReference>
<dbReference type="EMBL" id="AL935056">
    <property type="protein sequence ID" value="CAX15398.1"/>
    <property type="status" value="JOINED"/>
    <property type="molecule type" value="Genomic_DNA"/>
</dbReference>
<dbReference type="EMBL" id="AL935056">
    <property type="protein sequence ID" value="CAM46007.1"/>
    <property type="status" value="ALT_SEQ"/>
    <property type="molecule type" value="Genomic_DNA"/>
</dbReference>
<dbReference type="EMBL" id="AL845273">
    <property type="protein sequence ID" value="CAM46007.1"/>
    <property type="status" value="JOINED"/>
    <property type="molecule type" value="Genomic_DNA"/>
</dbReference>
<dbReference type="EMBL" id="AL845430">
    <property type="protein sequence ID" value="CAM46007.1"/>
    <property type="status" value="JOINED"/>
    <property type="molecule type" value="Genomic_DNA"/>
</dbReference>
<dbReference type="EMBL" id="AL935056">
    <property type="protein sequence ID" value="CAX15696.1"/>
    <property type="molecule type" value="Genomic_DNA"/>
</dbReference>
<dbReference type="EMBL" id="AL845273">
    <property type="protein sequence ID" value="CAX15696.1"/>
    <property type="status" value="JOINED"/>
    <property type="molecule type" value="Genomic_DNA"/>
</dbReference>
<dbReference type="EMBL" id="AL845430">
    <property type="protein sequence ID" value="CAX15696.1"/>
    <property type="status" value="JOINED"/>
    <property type="molecule type" value="Genomic_DNA"/>
</dbReference>
<dbReference type="EMBL" id="AK038838">
    <property type="protein sequence ID" value="BAC30146.1"/>
    <property type="status" value="ALT_SEQ"/>
    <property type="molecule type" value="mRNA"/>
</dbReference>
<dbReference type="EMBL" id="AK157932">
    <property type="protein sequence ID" value="BAE34270.1"/>
    <property type="molecule type" value="mRNA"/>
</dbReference>
<dbReference type="EMBL" id="BC053994">
    <property type="protein sequence ID" value="AAH53994.1"/>
    <property type="molecule type" value="mRNA"/>
</dbReference>
<dbReference type="EMBL" id="BC096528">
    <property type="protein sequence ID" value="AAH96528.1"/>
    <property type="molecule type" value="mRNA"/>
</dbReference>
<dbReference type="EMBL" id="AK173140">
    <property type="protein sequence ID" value="BAD32418.1"/>
    <property type="molecule type" value="mRNA"/>
</dbReference>
<dbReference type="RefSeq" id="NP_001028520.2">
    <property type="nucleotide sequence ID" value="NM_001033348.3"/>
</dbReference>
<dbReference type="SMR" id="A3KGS3"/>
<dbReference type="BioGRID" id="232342">
    <property type="interactions" value="12"/>
</dbReference>
<dbReference type="FunCoup" id="A3KGS3">
    <property type="interactions" value="2473"/>
</dbReference>
<dbReference type="STRING" id="10090.ENSMUSP00000105613"/>
<dbReference type="GlyGen" id="A3KGS3">
    <property type="glycosylation" value="3 sites, 1 N-linked glycan (1 site)"/>
</dbReference>
<dbReference type="iPTMnet" id="A3KGS3"/>
<dbReference type="PhosphoSitePlus" id="A3KGS3"/>
<dbReference type="jPOST" id="A3KGS3"/>
<dbReference type="PaxDb" id="10090-ENSMUSP00000105613"/>
<dbReference type="PeptideAtlas" id="A3KGS3"/>
<dbReference type="ProteomicsDB" id="253259">
    <molecule id="A3KGS3-1"/>
</dbReference>
<dbReference type="ProteomicsDB" id="253260">
    <molecule id="A3KGS3-2"/>
</dbReference>
<dbReference type="Antibodypedia" id="59154">
    <property type="antibodies" value="52 antibodies from 17 providers"/>
</dbReference>
<dbReference type="DNASU" id="241694"/>
<dbReference type="Ensembl" id="ENSMUST00000131824.8">
    <molecule id="A3KGS3-1"/>
    <property type="protein sequence ID" value="ENSMUSP00000122039.2"/>
    <property type="gene ID" value="ENSMUSG00000037110.21"/>
</dbReference>
<dbReference type="GeneID" id="241694"/>
<dbReference type="KEGG" id="mmu:241694"/>
<dbReference type="AGR" id="MGI:3036245"/>
<dbReference type="CTD" id="57186"/>
<dbReference type="MGI" id="MGI:3036245">
    <property type="gene designation" value="Ralgapa2"/>
</dbReference>
<dbReference type="VEuPathDB" id="HostDB:ENSMUSG00000037110"/>
<dbReference type="eggNOG" id="KOG3686">
    <property type="taxonomic scope" value="Eukaryota"/>
</dbReference>
<dbReference type="GeneTree" id="ENSGT00950000183139"/>
<dbReference type="HOGENOM" id="CLU_001676_0_0_1"/>
<dbReference type="InParanoid" id="A3KGS3"/>
<dbReference type="PhylomeDB" id="A3KGS3"/>
<dbReference type="TreeFam" id="TF324484"/>
<dbReference type="BioGRID-ORCS" id="241694">
    <property type="hits" value="2 hits in 78 CRISPR screens"/>
</dbReference>
<dbReference type="ChiTaRS" id="Ralgapa2">
    <property type="organism name" value="mouse"/>
</dbReference>
<dbReference type="PRO" id="PR:A3KGS3"/>
<dbReference type="Proteomes" id="UP000000589">
    <property type="component" value="Chromosome 2"/>
</dbReference>
<dbReference type="RNAct" id="A3KGS3">
    <property type="molecule type" value="protein"/>
</dbReference>
<dbReference type="Bgee" id="ENSMUSG00000037110">
    <property type="expression patterns" value="Expressed in ear vesicle and 218 other cell types or tissues"/>
</dbReference>
<dbReference type="ExpressionAtlas" id="A3KGS3">
    <property type="expression patterns" value="baseline and differential"/>
</dbReference>
<dbReference type="GO" id="GO:0005737">
    <property type="term" value="C:cytoplasm"/>
    <property type="evidence" value="ECO:0000250"/>
    <property type="project" value="UniProtKB"/>
</dbReference>
<dbReference type="GO" id="GO:0005829">
    <property type="term" value="C:cytosol"/>
    <property type="evidence" value="ECO:0000304"/>
    <property type="project" value="Reactome"/>
</dbReference>
<dbReference type="GO" id="GO:0005634">
    <property type="term" value="C:nucleus"/>
    <property type="evidence" value="ECO:0007669"/>
    <property type="project" value="InterPro"/>
</dbReference>
<dbReference type="GO" id="GO:0005886">
    <property type="term" value="C:plasma membrane"/>
    <property type="evidence" value="ECO:0007669"/>
    <property type="project" value="Ensembl"/>
</dbReference>
<dbReference type="GO" id="GO:0005096">
    <property type="term" value="F:GTPase activator activity"/>
    <property type="evidence" value="ECO:0000316"/>
    <property type="project" value="MGI"/>
</dbReference>
<dbReference type="GO" id="GO:0046982">
    <property type="term" value="F:protein heterodimerization activity"/>
    <property type="evidence" value="ECO:0000250"/>
    <property type="project" value="UniProtKB"/>
</dbReference>
<dbReference type="GO" id="GO:0090630">
    <property type="term" value="P:activation of GTPase activity"/>
    <property type="evidence" value="ECO:0000250"/>
    <property type="project" value="UniProtKB"/>
</dbReference>
<dbReference type="GO" id="GO:0032484">
    <property type="term" value="P:Ral protein signal transduction"/>
    <property type="evidence" value="ECO:0000315"/>
    <property type="project" value="MGI"/>
</dbReference>
<dbReference type="GO" id="GO:0060178">
    <property type="term" value="P:regulation of exocyst localization"/>
    <property type="evidence" value="ECO:0000315"/>
    <property type="project" value="MGI"/>
</dbReference>
<dbReference type="GO" id="GO:0032880">
    <property type="term" value="P:regulation of protein localization"/>
    <property type="evidence" value="ECO:0000315"/>
    <property type="project" value="MGI"/>
</dbReference>
<dbReference type="GO" id="GO:0051056">
    <property type="term" value="P:regulation of small GTPase mediated signal transduction"/>
    <property type="evidence" value="ECO:0007669"/>
    <property type="project" value="InterPro"/>
</dbReference>
<dbReference type="FunFam" id="3.40.50.11210:FF:000001">
    <property type="entry name" value="Ral GTPase-activating protein subunit alpha-1 isoform 1"/>
    <property type="match status" value="1"/>
</dbReference>
<dbReference type="Gene3D" id="3.40.50.11210">
    <property type="entry name" value="Rap/Ran-GAP"/>
    <property type="match status" value="1"/>
</dbReference>
<dbReference type="InterPro" id="IPR016024">
    <property type="entry name" value="ARM-type_fold"/>
</dbReference>
<dbReference type="InterPro" id="IPR035974">
    <property type="entry name" value="Rap/Ran-GAP_sf"/>
</dbReference>
<dbReference type="InterPro" id="IPR000331">
    <property type="entry name" value="Rap/Ran_GAP_dom"/>
</dbReference>
<dbReference type="InterPro" id="IPR046859">
    <property type="entry name" value="RGPA/RALGAPB_N"/>
</dbReference>
<dbReference type="InterPro" id="IPR027107">
    <property type="entry name" value="Tuberin/Ral-act_asu"/>
</dbReference>
<dbReference type="PANTHER" id="PTHR10063:SF2">
    <property type="entry name" value="RAL GTPASE-ACTIVATING PROTEIN SUBUNIT ALPHA-2"/>
    <property type="match status" value="1"/>
</dbReference>
<dbReference type="PANTHER" id="PTHR10063">
    <property type="entry name" value="TUBERIN"/>
    <property type="match status" value="1"/>
</dbReference>
<dbReference type="Pfam" id="PF20412">
    <property type="entry name" value="RALGAPB_N"/>
    <property type="match status" value="1"/>
</dbReference>
<dbReference type="Pfam" id="PF02145">
    <property type="entry name" value="Rap_GAP"/>
    <property type="match status" value="1"/>
</dbReference>
<dbReference type="SUPFAM" id="SSF48371">
    <property type="entry name" value="ARM repeat"/>
    <property type="match status" value="1"/>
</dbReference>
<dbReference type="SUPFAM" id="SSF111347">
    <property type="entry name" value="Rap/Ran-GAP"/>
    <property type="match status" value="1"/>
</dbReference>
<dbReference type="PROSITE" id="PS50085">
    <property type="entry name" value="RAPGAP"/>
    <property type="match status" value="1"/>
</dbReference>
<keyword id="KW-0025">Alternative splicing</keyword>
<keyword id="KW-0963">Cytoplasm</keyword>
<keyword id="KW-0343">GTPase activation</keyword>
<keyword id="KW-0597">Phosphoprotein</keyword>
<keyword id="KW-1185">Reference proteome</keyword>
<accession>A3KGS3</accession>
<accession>A3KGS5</accession>
<accession>B7ZCU9</accession>
<accession>Q3TZD9</accession>
<accession>Q4VA60</accession>
<accession>Q69ZM8</accession>
<accession>Q7TQL4</accession>
<accession>Q8BYP2</accession>
<evidence type="ECO:0000250" key="1"/>
<evidence type="ECO:0000250" key="2">
    <source>
        <dbReference type="UniProtKB" id="Q2PPJ7"/>
    </source>
</evidence>
<evidence type="ECO:0000255" key="3">
    <source>
        <dbReference type="PROSITE-ProRule" id="PRU00165"/>
    </source>
</evidence>
<evidence type="ECO:0000256" key="4">
    <source>
        <dbReference type="SAM" id="MobiDB-lite"/>
    </source>
</evidence>
<evidence type="ECO:0000269" key="5">
    <source>
    </source>
</evidence>
<evidence type="ECO:0000303" key="6">
    <source>
    </source>
</evidence>
<evidence type="ECO:0000305" key="7"/>
<evidence type="ECO:0007744" key="8">
    <source>
    </source>
</evidence>
<evidence type="ECO:0007744" key="9">
    <source>
    </source>
</evidence>
<gene>
    <name type="primary">Ralgapa2</name>
    <name type="synonym">Kiaa1272</name>
</gene>
<reference key="1">
    <citation type="journal article" date="2006" name="Cell. Signal.">
        <title>Adipocytes contain a novel complex similar to the tuberous sclerosis complex.</title>
        <authorList>
            <person name="Gridley S."/>
            <person name="Chavez J.A."/>
            <person name="Lane W.S."/>
            <person name="Lienhard G.E."/>
        </authorList>
    </citation>
    <scope>NUCLEOTIDE SEQUENCE [MRNA] (ISOFORM 1)</scope>
    <scope>INTERACTION WITH RALGAPB</scope>
    <scope>TISSUE SPECIFICITY</scope>
</reference>
<reference key="2">
    <citation type="journal article" date="2009" name="PLoS Biol.">
        <title>Lineage-specific biology revealed by a finished genome assembly of the mouse.</title>
        <authorList>
            <person name="Church D.M."/>
            <person name="Goodstadt L."/>
            <person name="Hillier L.W."/>
            <person name="Zody M.C."/>
            <person name="Goldstein S."/>
            <person name="She X."/>
            <person name="Bult C.J."/>
            <person name="Agarwala R."/>
            <person name="Cherry J.L."/>
            <person name="DiCuccio M."/>
            <person name="Hlavina W."/>
            <person name="Kapustin Y."/>
            <person name="Meric P."/>
            <person name="Maglott D."/>
            <person name="Birtle Z."/>
            <person name="Marques A.C."/>
            <person name="Graves T."/>
            <person name="Zhou S."/>
            <person name="Teague B."/>
            <person name="Potamousis K."/>
            <person name="Churas C."/>
            <person name="Place M."/>
            <person name="Herschleb J."/>
            <person name="Runnheim R."/>
            <person name="Forrest D."/>
            <person name="Amos-Landgraf J."/>
            <person name="Schwartz D.C."/>
            <person name="Cheng Z."/>
            <person name="Lindblad-Toh K."/>
            <person name="Eichler E.E."/>
            <person name="Ponting C.P."/>
        </authorList>
    </citation>
    <scope>NUCLEOTIDE SEQUENCE [LARGE SCALE GENOMIC DNA]</scope>
    <source>
        <strain>C57BL/6J</strain>
    </source>
</reference>
<reference key="3">
    <citation type="journal article" date="2005" name="Science">
        <title>The transcriptional landscape of the mammalian genome.</title>
        <authorList>
            <person name="Carninci P."/>
            <person name="Kasukawa T."/>
            <person name="Katayama S."/>
            <person name="Gough J."/>
            <person name="Frith M.C."/>
            <person name="Maeda N."/>
            <person name="Oyama R."/>
            <person name="Ravasi T."/>
            <person name="Lenhard B."/>
            <person name="Wells C."/>
            <person name="Kodzius R."/>
            <person name="Shimokawa K."/>
            <person name="Bajic V.B."/>
            <person name="Brenner S.E."/>
            <person name="Batalov S."/>
            <person name="Forrest A.R."/>
            <person name="Zavolan M."/>
            <person name="Davis M.J."/>
            <person name="Wilming L.G."/>
            <person name="Aidinis V."/>
            <person name="Allen J.E."/>
            <person name="Ambesi-Impiombato A."/>
            <person name="Apweiler R."/>
            <person name="Aturaliya R.N."/>
            <person name="Bailey T.L."/>
            <person name="Bansal M."/>
            <person name="Baxter L."/>
            <person name="Beisel K.W."/>
            <person name="Bersano T."/>
            <person name="Bono H."/>
            <person name="Chalk A.M."/>
            <person name="Chiu K.P."/>
            <person name="Choudhary V."/>
            <person name="Christoffels A."/>
            <person name="Clutterbuck D.R."/>
            <person name="Crowe M.L."/>
            <person name="Dalla E."/>
            <person name="Dalrymple B.P."/>
            <person name="de Bono B."/>
            <person name="Della Gatta G."/>
            <person name="di Bernardo D."/>
            <person name="Down T."/>
            <person name="Engstrom P."/>
            <person name="Fagiolini M."/>
            <person name="Faulkner G."/>
            <person name="Fletcher C.F."/>
            <person name="Fukushima T."/>
            <person name="Furuno M."/>
            <person name="Futaki S."/>
            <person name="Gariboldi M."/>
            <person name="Georgii-Hemming P."/>
            <person name="Gingeras T.R."/>
            <person name="Gojobori T."/>
            <person name="Green R.E."/>
            <person name="Gustincich S."/>
            <person name="Harbers M."/>
            <person name="Hayashi Y."/>
            <person name="Hensch T.K."/>
            <person name="Hirokawa N."/>
            <person name="Hill D."/>
            <person name="Huminiecki L."/>
            <person name="Iacono M."/>
            <person name="Ikeo K."/>
            <person name="Iwama A."/>
            <person name="Ishikawa T."/>
            <person name="Jakt M."/>
            <person name="Kanapin A."/>
            <person name="Katoh M."/>
            <person name="Kawasawa Y."/>
            <person name="Kelso J."/>
            <person name="Kitamura H."/>
            <person name="Kitano H."/>
            <person name="Kollias G."/>
            <person name="Krishnan S.P."/>
            <person name="Kruger A."/>
            <person name="Kummerfeld S.K."/>
            <person name="Kurochkin I.V."/>
            <person name="Lareau L.F."/>
            <person name="Lazarevic D."/>
            <person name="Lipovich L."/>
            <person name="Liu J."/>
            <person name="Liuni S."/>
            <person name="McWilliam S."/>
            <person name="Madan Babu M."/>
            <person name="Madera M."/>
            <person name="Marchionni L."/>
            <person name="Matsuda H."/>
            <person name="Matsuzawa S."/>
            <person name="Miki H."/>
            <person name="Mignone F."/>
            <person name="Miyake S."/>
            <person name="Morris K."/>
            <person name="Mottagui-Tabar S."/>
            <person name="Mulder N."/>
            <person name="Nakano N."/>
            <person name="Nakauchi H."/>
            <person name="Ng P."/>
            <person name="Nilsson R."/>
            <person name="Nishiguchi S."/>
            <person name="Nishikawa S."/>
            <person name="Nori F."/>
            <person name="Ohara O."/>
            <person name="Okazaki Y."/>
            <person name="Orlando V."/>
            <person name="Pang K.C."/>
            <person name="Pavan W.J."/>
            <person name="Pavesi G."/>
            <person name="Pesole G."/>
            <person name="Petrovsky N."/>
            <person name="Piazza S."/>
            <person name="Reed J."/>
            <person name="Reid J.F."/>
            <person name="Ring B.Z."/>
            <person name="Ringwald M."/>
            <person name="Rost B."/>
            <person name="Ruan Y."/>
            <person name="Salzberg S.L."/>
            <person name="Sandelin A."/>
            <person name="Schneider C."/>
            <person name="Schoenbach C."/>
            <person name="Sekiguchi K."/>
            <person name="Semple C.A."/>
            <person name="Seno S."/>
            <person name="Sessa L."/>
            <person name="Sheng Y."/>
            <person name="Shibata Y."/>
            <person name="Shimada H."/>
            <person name="Shimada K."/>
            <person name="Silva D."/>
            <person name="Sinclair B."/>
            <person name="Sperling S."/>
            <person name="Stupka E."/>
            <person name="Sugiura K."/>
            <person name="Sultana R."/>
            <person name="Takenaka Y."/>
            <person name="Taki K."/>
            <person name="Tammoja K."/>
            <person name="Tan S.L."/>
            <person name="Tang S."/>
            <person name="Taylor M.S."/>
            <person name="Tegner J."/>
            <person name="Teichmann S.A."/>
            <person name="Ueda H.R."/>
            <person name="van Nimwegen E."/>
            <person name="Verardo R."/>
            <person name="Wei C.L."/>
            <person name="Yagi K."/>
            <person name="Yamanishi H."/>
            <person name="Zabarovsky E."/>
            <person name="Zhu S."/>
            <person name="Zimmer A."/>
            <person name="Hide W."/>
            <person name="Bult C."/>
            <person name="Grimmond S.M."/>
            <person name="Teasdale R.D."/>
            <person name="Liu E.T."/>
            <person name="Brusic V."/>
            <person name="Quackenbush J."/>
            <person name="Wahlestedt C."/>
            <person name="Mattick J.S."/>
            <person name="Hume D.A."/>
            <person name="Kai C."/>
            <person name="Sasaki D."/>
            <person name="Tomaru Y."/>
            <person name="Fukuda S."/>
            <person name="Kanamori-Katayama M."/>
            <person name="Suzuki M."/>
            <person name="Aoki J."/>
            <person name="Arakawa T."/>
            <person name="Iida J."/>
            <person name="Imamura K."/>
            <person name="Itoh M."/>
            <person name="Kato T."/>
            <person name="Kawaji H."/>
            <person name="Kawagashira N."/>
            <person name="Kawashima T."/>
            <person name="Kojima M."/>
            <person name="Kondo S."/>
            <person name="Konno H."/>
            <person name="Nakano K."/>
            <person name="Ninomiya N."/>
            <person name="Nishio T."/>
            <person name="Okada M."/>
            <person name="Plessy C."/>
            <person name="Shibata K."/>
            <person name="Shiraki T."/>
            <person name="Suzuki S."/>
            <person name="Tagami M."/>
            <person name="Waki K."/>
            <person name="Watahiki A."/>
            <person name="Okamura-Oho Y."/>
            <person name="Suzuki H."/>
            <person name="Kawai J."/>
            <person name="Hayashizaki Y."/>
        </authorList>
    </citation>
    <scope>NUCLEOTIDE SEQUENCE [LARGE SCALE MRNA] OF 1-734 (ISOFORMS 1/2)</scope>
    <source>
        <strain>C57BL/6J</strain>
        <tissue>Hypothalamus</tissue>
        <tissue>Inner ear</tissue>
    </source>
</reference>
<reference key="4">
    <citation type="journal article" date="2004" name="Genome Res.">
        <title>The status, quality, and expansion of the NIH full-length cDNA project: the Mammalian Gene Collection (MGC).</title>
        <authorList>
            <consortium name="The MGC Project Team"/>
        </authorList>
    </citation>
    <scope>NUCLEOTIDE SEQUENCE [LARGE SCALE MRNA] OF 975-1872 (ISOFORM 2)</scope>
    <scope>NUCLEOTIDE SEQUENCE [LARGE SCALE MRNA] OF 1196-1872 (ISOFORM 1)</scope>
    <source>
        <strain>C57BL/6J</strain>
        <strain>FVB/N</strain>
        <tissue>Brain</tissue>
        <tissue>Colon</tissue>
    </source>
</reference>
<reference key="5">
    <citation type="journal article" date="2004" name="DNA Res.">
        <title>Prediction of the coding sequences of mouse homologues of KIAA gene: IV. The complete nucleotide sequences of 500 mouse KIAA-homologous cDNAs identified by screening of terminal sequences of cDNA clones randomly sampled from size-fractionated libraries.</title>
        <authorList>
            <person name="Okazaki N."/>
            <person name="Kikuno R."/>
            <person name="Ohara R."/>
            <person name="Inamoto S."/>
            <person name="Koseki H."/>
            <person name="Hiraoka S."/>
            <person name="Saga Y."/>
            <person name="Seino S."/>
            <person name="Nishimura M."/>
            <person name="Kaisho T."/>
            <person name="Hoshino K."/>
            <person name="Kitamura H."/>
            <person name="Nagase T."/>
            <person name="Ohara O."/>
            <person name="Koga H."/>
        </authorList>
    </citation>
    <scope>NUCLEOTIDE SEQUENCE [LARGE SCALE MRNA] OF 1406-1872 (ISOFORM 1)</scope>
    <source>
        <tissue>Pancreatic islet</tissue>
    </source>
</reference>
<reference key="6">
    <citation type="journal article" date="2007" name="Proc. Natl. Acad. Sci. U.S.A.">
        <title>Large-scale phosphorylation analysis of mouse liver.</title>
        <authorList>
            <person name="Villen J."/>
            <person name="Beausoleil S.A."/>
            <person name="Gerber S.A."/>
            <person name="Gygi S.P."/>
        </authorList>
    </citation>
    <scope>PHOSPHORYLATION [LARGE SCALE ANALYSIS] AT SER-819 AND SER-820</scope>
    <scope>IDENTIFICATION BY MASS SPECTROMETRY [LARGE SCALE ANALYSIS]</scope>
    <source>
        <tissue>Liver</tissue>
    </source>
</reference>
<reference key="7">
    <citation type="journal article" date="2010" name="Cell">
        <title>A tissue-specific atlas of mouse protein phosphorylation and expression.</title>
        <authorList>
            <person name="Huttlin E.L."/>
            <person name="Jedrychowski M.P."/>
            <person name="Elias J.E."/>
            <person name="Goswami T."/>
            <person name="Rad R."/>
            <person name="Beausoleil S.A."/>
            <person name="Villen J."/>
            <person name="Haas W."/>
            <person name="Sowa M.E."/>
            <person name="Gygi S.P."/>
        </authorList>
    </citation>
    <scope>PHOSPHORYLATION [LARGE SCALE ANALYSIS] AT SER-373; SER-376; SER-379; SER-486; SER-819 AND SER-820</scope>
    <scope>IDENTIFICATION BY MASS SPECTROMETRY [LARGE SCALE ANALYSIS]</scope>
    <source>
        <tissue>Brain</tissue>
        <tissue>Brown adipose tissue</tissue>
        <tissue>Heart</tissue>
        <tissue>Kidney</tissue>
        <tissue>Liver</tissue>
        <tissue>Lung</tissue>
        <tissue>Pancreas</tissue>
        <tissue>Spleen</tissue>
        <tissue>Testis</tissue>
    </source>
</reference>